<comment type="function">
    <text evidence="1">Component of the dark-operative protochlorophyllide reductase (DPOR) that uses Mg-ATP and reduced ferredoxin to reduce ring D of protochlorophyllide (Pchlide) to form chlorophyllide a (Chlide). This reaction is light-independent. The NB-protein (BchN-BchB) is the catalytic component of the complex.</text>
</comment>
<comment type="catalytic activity">
    <reaction evidence="1">
        <text>chlorophyllide a + oxidized 2[4Fe-4S]-[ferredoxin] + 2 ADP + 2 phosphate = protochlorophyllide a + reduced 2[4Fe-4S]-[ferredoxin] + 2 ATP + 2 H2O</text>
        <dbReference type="Rhea" id="RHEA:28202"/>
        <dbReference type="Rhea" id="RHEA-COMP:10002"/>
        <dbReference type="Rhea" id="RHEA-COMP:10004"/>
        <dbReference type="ChEBI" id="CHEBI:15377"/>
        <dbReference type="ChEBI" id="CHEBI:30616"/>
        <dbReference type="ChEBI" id="CHEBI:33722"/>
        <dbReference type="ChEBI" id="CHEBI:33723"/>
        <dbReference type="ChEBI" id="CHEBI:43474"/>
        <dbReference type="ChEBI" id="CHEBI:83348"/>
        <dbReference type="ChEBI" id="CHEBI:83350"/>
        <dbReference type="ChEBI" id="CHEBI:456216"/>
        <dbReference type="EC" id="1.3.7.7"/>
    </reaction>
</comment>
<comment type="cofactor">
    <cofactor evidence="1">
        <name>[4Fe-4S] cluster</name>
        <dbReference type="ChEBI" id="CHEBI:49883"/>
    </cofactor>
    <text evidence="1">Binds 1 [4Fe-4S] cluster per heterodimer. The cluster is bound at the heterodimer interface by residues from both subunits.</text>
</comment>
<comment type="pathway">
    <text evidence="1">Porphyrin-containing compound metabolism; bacteriochlorophyll biosynthesis (light-independent).</text>
</comment>
<comment type="subunit">
    <text evidence="1">Protochlorophyllide reductase is composed of three subunits; BchL, BchN and BchB. Forms a heterotetramer of two BchB and two BchN subunits.</text>
</comment>
<comment type="similarity">
    <text evidence="1">Belongs to the ChlB/BchB/BchZ family.</text>
</comment>
<keyword id="KW-0004">4Fe-4S</keyword>
<keyword id="KW-0067">ATP-binding</keyword>
<keyword id="KW-0077">Bacteriochlorophyll biosynthesis</keyword>
<keyword id="KW-0149">Chlorophyll biosynthesis</keyword>
<keyword id="KW-0408">Iron</keyword>
<keyword id="KW-0411">Iron-sulfur</keyword>
<keyword id="KW-0479">Metal-binding</keyword>
<keyword id="KW-0547">Nucleotide-binding</keyword>
<keyword id="KW-0560">Oxidoreductase</keyword>
<keyword id="KW-0602">Photosynthesis</keyword>
<dbReference type="EC" id="1.3.7.7" evidence="1"/>
<dbReference type="EMBL" id="CP001364">
    <property type="protein sequence ID" value="ACM54149.1"/>
    <property type="molecule type" value="Genomic_DNA"/>
</dbReference>
<dbReference type="SMR" id="B9LKM4"/>
<dbReference type="KEGG" id="chl:Chy400_2760"/>
<dbReference type="HOGENOM" id="CLU_025470_0_0_0"/>
<dbReference type="OrthoDB" id="495776at2"/>
<dbReference type="UniPathway" id="UPA00671"/>
<dbReference type="GO" id="GO:0051539">
    <property type="term" value="F:4 iron, 4 sulfur cluster binding"/>
    <property type="evidence" value="ECO:0007669"/>
    <property type="project" value="UniProtKB-UniRule"/>
</dbReference>
<dbReference type="GO" id="GO:0005524">
    <property type="term" value="F:ATP binding"/>
    <property type="evidence" value="ECO:0007669"/>
    <property type="project" value="UniProtKB-UniRule"/>
</dbReference>
<dbReference type="GO" id="GO:0046872">
    <property type="term" value="F:metal ion binding"/>
    <property type="evidence" value="ECO:0007669"/>
    <property type="project" value="UniProtKB-KW"/>
</dbReference>
<dbReference type="GO" id="GO:0016730">
    <property type="term" value="F:oxidoreductase activity, acting on iron-sulfur proteins as donors"/>
    <property type="evidence" value="ECO:0007669"/>
    <property type="project" value="InterPro"/>
</dbReference>
<dbReference type="GO" id="GO:0016636">
    <property type="term" value="F:oxidoreductase activity, acting on the CH-CH group of donors, iron-sulfur protein as acceptor"/>
    <property type="evidence" value="ECO:0007669"/>
    <property type="project" value="UniProtKB-UniRule"/>
</dbReference>
<dbReference type="GO" id="GO:0036070">
    <property type="term" value="P:light-independent bacteriochlorophyll biosynthetic process"/>
    <property type="evidence" value="ECO:0007669"/>
    <property type="project" value="UniProtKB-UniRule"/>
</dbReference>
<dbReference type="GO" id="GO:0019685">
    <property type="term" value="P:photosynthesis, dark reaction"/>
    <property type="evidence" value="ECO:0007669"/>
    <property type="project" value="InterPro"/>
</dbReference>
<dbReference type="CDD" id="cd01981">
    <property type="entry name" value="Pchlide_reductase_B"/>
    <property type="match status" value="1"/>
</dbReference>
<dbReference type="Gene3D" id="1.20.89.20">
    <property type="match status" value="1"/>
</dbReference>
<dbReference type="Gene3D" id="3.40.50.1980">
    <property type="entry name" value="Nitrogenase molybdenum iron protein domain"/>
    <property type="match status" value="3"/>
</dbReference>
<dbReference type="Gene3D" id="1.10.8.550">
    <property type="entry name" value="Proto-chlorophyllide reductase 57 kD subunit B"/>
    <property type="match status" value="1"/>
</dbReference>
<dbReference type="HAMAP" id="MF_00353">
    <property type="entry name" value="ChlB_BchB"/>
    <property type="match status" value="1"/>
</dbReference>
<dbReference type="InterPro" id="IPR050152">
    <property type="entry name" value="ChlB/BchB/BchZ"/>
</dbReference>
<dbReference type="InterPro" id="IPR013580">
    <property type="entry name" value="LI-POR_suB-like_C"/>
</dbReference>
<dbReference type="InterPro" id="IPR000510">
    <property type="entry name" value="Nase/OxRdtase_comp1"/>
</dbReference>
<dbReference type="InterPro" id="IPR042298">
    <property type="entry name" value="P-CP_red_C"/>
</dbReference>
<dbReference type="InterPro" id="IPR005969">
    <property type="entry name" value="Protochl_reductB"/>
</dbReference>
<dbReference type="InterPro" id="IPR016209">
    <property type="entry name" value="Protochlorophyllide_Rdtase"/>
</dbReference>
<dbReference type="NCBIfam" id="TIGR01278">
    <property type="entry name" value="DPOR_BchB"/>
    <property type="match status" value="1"/>
</dbReference>
<dbReference type="NCBIfam" id="NF002789">
    <property type="entry name" value="PRK02910.1-3"/>
    <property type="match status" value="1"/>
</dbReference>
<dbReference type="PANTHER" id="PTHR33712">
    <property type="entry name" value="LIGHT-INDEPENDENT PROTOCHLOROPHYLLIDE REDUCTASE SUBUNIT B"/>
    <property type="match status" value="1"/>
</dbReference>
<dbReference type="PANTHER" id="PTHR33712:SF7">
    <property type="entry name" value="LIGHT-INDEPENDENT PROTOCHLOROPHYLLIDE REDUCTASE SUBUNIT B"/>
    <property type="match status" value="1"/>
</dbReference>
<dbReference type="Pfam" id="PF00148">
    <property type="entry name" value="Oxidored_nitro"/>
    <property type="match status" value="1"/>
</dbReference>
<dbReference type="Pfam" id="PF08369">
    <property type="entry name" value="PCP_red"/>
    <property type="match status" value="1"/>
</dbReference>
<dbReference type="PIRSF" id="PIRSF000163">
    <property type="entry name" value="PCP_ChlB"/>
    <property type="match status" value="1"/>
</dbReference>
<dbReference type="SUPFAM" id="SSF53807">
    <property type="entry name" value="Helical backbone' metal receptor"/>
    <property type="match status" value="1"/>
</dbReference>
<name>BCHB_CHLSY</name>
<proteinExistence type="inferred from homology"/>
<protein>
    <recommendedName>
        <fullName evidence="1">Light-independent protochlorophyllide reductase subunit B</fullName>
        <shortName evidence="1">DPOR subunit B</shortName>
        <shortName evidence="1">LI-POR subunit B</shortName>
        <ecNumber evidence="1">1.3.7.7</ecNumber>
    </recommendedName>
</protein>
<feature type="chain" id="PRO_1000133420" description="Light-independent protochlorophyllide reductase subunit B">
    <location>
        <begin position="1"/>
        <end position="541"/>
    </location>
</feature>
<feature type="active site" description="Proton donor" evidence="1">
    <location>
        <position position="286"/>
    </location>
</feature>
<feature type="binding site" evidence="1">
    <location>
        <position position="36"/>
    </location>
    <ligand>
        <name>[4Fe-4S] cluster</name>
        <dbReference type="ChEBI" id="CHEBI:49883"/>
        <note>ligand shared with heterodimeric partner</note>
    </ligand>
</feature>
<feature type="binding site" evidence="1">
    <location>
        <begin position="421"/>
        <end position="422"/>
    </location>
    <ligand>
        <name>substrate</name>
    </ligand>
</feature>
<organism>
    <name type="scientific">Chloroflexus aurantiacus (strain ATCC 29364 / DSM 637 / Y-400-fl)</name>
    <dbReference type="NCBI Taxonomy" id="480224"/>
    <lineage>
        <taxon>Bacteria</taxon>
        <taxon>Bacillati</taxon>
        <taxon>Chloroflexota</taxon>
        <taxon>Chloroflexia</taxon>
        <taxon>Chloroflexales</taxon>
        <taxon>Chloroflexineae</taxon>
        <taxon>Chloroflexaceae</taxon>
        <taxon>Chloroflexus</taxon>
    </lineage>
</organism>
<reference key="1">
    <citation type="submission" date="2009-01" db="EMBL/GenBank/DDBJ databases">
        <title>Complete sequence of Chloroflexus sp. Y-400-fl.</title>
        <authorList>
            <consortium name="US DOE Joint Genome Institute"/>
            <person name="Lucas S."/>
            <person name="Copeland A."/>
            <person name="Lapidus A."/>
            <person name="Glavina del Rio T."/>
            <person name="Dalin E."/>
            <person name="Tice H."/>
            <person name="Bruce D."/>
            <person name="Goodwin L."/>
            <person name="Pitluck S."/>
            <person name="Sims D."/>
            <person name="Kiss H."/>
            <person name="Brettin T."/>
            <person name="Detter J.C."/>
            <person name="Han C."/>
            <person name="Larimer F."/>
            <person name="Land M."/>
            <person name="Hauser L."/>
            <person name="Kyrpides N."/>
            <person name="Ovchinnikova G."/>
            <person name="Bryant D.A."/>
            <person name="Richardson P."/>
        </authorList>
    </citation>
    <scope>NUCLEOTIDE SEQUENCE [LARGE SCALE GENOMIC DNA]</scope>
    <source>
        <strain>ATCC 29364 / DSM 637 / Y-400-fl</strain>
    </source>
</reference>
<evidence type="ECO:0000255" key="1">
    <source>
        <dbReference type="HAMAP-Rule" id="MF_00353"/>
    </source>
</evidence>
<sequence length="541" mass="59182">MRLAYWMYEGTAHHGVGRIANSMRNVHAVFHAPQGDDYVNAIFAMLDRTPNFPAMTTSVVSGTDLARGTIRLPDTLRQVEERVHPDLIVVVASCSTILLQENLEIAAQHAGLQCEVMVYDANPYRMQEIVAAESLFTDLVKRFAKPQPRTERPTVNILGPASLGFHARHDLISLRRMLKTLGLEVNVVAPWGASIADLRRLPAAWLTIAPYRELGLRAAIYLEEQFGVPALLDAPIGVQPTLRWIERLRELLAQAGADVPMPPLTAFSLDGMSAPSAVPWFARTADMDSFSGKPAFVFGDATHVVGVTRFLRDELGMPIAGAGTYVKHQADWVREQLTGYVDEVLVTDEFQVVADRIAALRPELVCGTQMERHTSRRYDLNCMVISPPTHIENHLLAYRPFLGFDGADVIADEVYTTCTLGMEKHLIDLFGDAGLDLPEKTERTPVAEPAPVAATVESPQPQNEPAIAVASAPSLTSAPATPTPAAVVDPVWAADAEAMLKKVPFFVRGRVRGNVEKYARQRGHAVITAEVLLAAKEELGA</sequence>
<gene>
    <name evidence="1" type="primary">bchB</name>
    <name type="ordered locus">Chy400_2760</name>
</gene>
<accession>B9LKM4</accession>